<keyword id="KW-1185">Reference proteome</keyword>
<keyword id="KW-0687">Ribonucleoprotein</keyword>
<keyword id="KW-0689">Ribosomal protein</keyword>
<keyword id="KW-0694">RNA-binding</keyword>
<keyword id="KW-0699">rRNA-binding</keyword>
<feature type="chain" id="PRO_0000125180" description="Large ribosomal subunit protein uL22">
    <location>
        <begin position="1"/>
        <end position="110"/>
    </location>
</feature>
<evidence type="ECO:0000255" key="1">
    <source>
        <dbReference type="HAMAP-Rule" id="MF_01331"/>
    </source>
</evidence>
<evidence type="ECO:0000305" key="2"/>
<organism>
    <name type="scientific">Mycoplasma mobile (strain ATCC 43663 / 163K / NCTC 11711)</name>
    <name type="common">Mesomycoplasma mobile</name>
    <dbReference type="NCBI Taxonomy" id="267748"/>
    <lineage>
        <taxon>Bacteria</taxon>
        <taxon>Bacillati</taxon>
        <taxon>Mycoplasmatota</taxon>
        <taxon>Mycoplasmoidales</taxon>
        <taxon>Metamycoplasmataceae</taxon>
        <taxon>Mesomycoplasma</taxon>
    </lineage>
</organism>
<protein>
    <recommendedName>
        <fullName evidence="1">Large ribosomal subunit protein uL22</fullName>
    </recommendedName>
    <alternativeName>
        <fullName evidence="2">50S ribosomal protein L22</fullName>
    </alternativeName>
</protein>
<sequence length="110" mass="12408">MESRATVKVQRISARKARLVADLIRYKSANDALSILYNTNKKASALFIKLLNSAVANAINNHGMNNEKLVVEKVLVNEGPTLKRFQPRSQGRAYSIFKRTSHLEIVLKEK</sequence>
<proteinExistence type="inferred from homology"/>
<gene>
    <name evidence="1" type="primary">rplV</name>
    <name type="ordered locus">MMOB2400</name>
</gene>
<name>RL22_MYCM1</name>
<dbReference type="EMBL" id="AE017308">
    <property type="protein sequence ID" value="AAT27726.1"/>
    <property type="molecule type" value="Genomic_DNA"/>
</dbReference>
<dbReference type="RefSeq" id="WP_011264760.1">
    <property type="nucleotide sequence ID" value="NC_006908.1"/>
</dbReference>
<dbReference type="SMR" id="Q6KI50"/>
<dbReference type="STRING" id="267748.MMOB2400"/>
<dbReference type="KEGG" id="mmo:MMOB2400"/>
<dbReference type="eggNOG" id="COG0091">
    <property type="taxonomic scope" value="Bacteria"/>
</dbReference>
<dbReference type="HOGENOM" id="CLU_083987_3_3_14"/>
<dbReference type="OrthoDB" id="9805969at2"/>
<dbReference type="Proteomes" id="UP000009072">
    <property type="component" value="Chromosome"/>
</dbReference>
<dbReference type="GO" id="GO:0022625">
    <property type="term" value="C:cytosolic large ribosomal subunit"/>
    <property type="evidence" value="ECO:0007669"/>
    <property type="project" value="TreeGrafter"/>
</dbReference>
<dbReference type="GO" id="GO:0019843">
    <property type="term" value="F:rRNA binding"/>
    <property type="evidence" value="ECO:0007669"/>
    <property type="project" value="UniProtKB-UniRule"/>
</dbReference>
<dbReference type="GO" id="GO:0003735">
    <property type="term" value="F:structural constituent of ribosome"/>
    <property type="evidence" value="ECO:0007669"/>
    <property type="project" value="InterPro"/>
</dbReference>
<dbReference type="GO" id="GO:0006412">
    <property type="term" value="P:translation"/>
    <property type="evidence" value="ECO:0007669"/>
    <property type="project" value="UniProtKB-UniRule"/>
</dbReference>
<dbReference type="CDD" id="cd00336">
    <property type="entry name" value="Ribosomal_L22"/>
    <property type="match status" value="1"/>
</dbReference>
<dbReference type="Gene3D" id="3.90.470.10">
    <property type="entry name" value="Ribosomal protein L22/L17"/>
    <property type="match status" value="1"/>
</dbReference>
<dbReference type="HAMAP" id="MF_01331_B">
    <property type="entry name" value="Ribosomal_uL22_B"/>
    <property type="match status" value="1"/>
</dbReference>
<dbReference type="InterPro" id="IPR001063">
    <property type="entry name" value="Ribosomal_uL22"/>
</dbReference>
<dbReference type="InterPro" id="IPR005727">
    <property type="entry name" value="Ribosomal_uL22_bac/chlpt-type"/>
</dbReference>
<dbReference type="InterPro" id="IPR047867">
    <property type="entry name" value="Ribosomal_uL22_bac/org-type"/>
</dbReference>
<dbReference type="InterPro" id="IPR018260">
    <property type="entry name" value="Ribosomal_uL22_CS"/>
</dbReference>
<dbReference type="InterPro" id="IPR036394">
    <property type="entry name" value="Ribosomal_uL22_sf"/>
</dbReference>
<dbReference type="NCBIfam" id="TIGR01044">
    <property type="entry name" value="rplV_bact"/>
    <property type="match status" value="1"/>
</dbReference>
<dbReference type="PANTHER" id="PTHR13501">
    <property type="entry name" value="CHLOROPLAST 50S RIBOSOMAL PROTEIN L22-RELATED"/>
    <property type="match status" value="1"/>
</dbReference>
<dbReference type="PANTHER" id="PTHR13501:SF8">
    <property type="entry name" value="LARGE RIBOSOMAL SUBUNIT PROTEIN UL22M"/>
    <property type="match status" value="1"/>
</dbReference>
<dbReference type="Pfam" id="PF00237">
    <property type="entry name" value="Ribosomal_L22"/>
    <property type="match status" value="1"/>
</dbReference>
<dbReference type="SUPFAM" id="SSF54843">
    <property type="entry name" value="Ribosomal protein L22"/>
    <property type="match status" value="1"/>
</dbReference>
<dbReference type="PROSITE" id="PS00464">
    <property type="entry name" value="RIBOSOMAL_L22"/>
    <property type="match status" value="1"/>
</dbReference>
<accession>Q6KI50</accession>
<comment type="function">
    <text evidence="1">This protein binds specifically to 23S rRNA; its binding is stimulated by other ribosomal proteins, e.g. L4, L17, and L20. It is important during the early stages of 50S assembly. It makes multiple contacts with different domains of the 23S rRNA in the assembled 50S subunit and ribosome (By similarity).</text>
</comment>
<comment type="function">
    <text evidence="1">The globular domain of the protein is located near the polypeptide exit tunnel on the outside of the subunit, while an extended beta-hairpin is found that lines the wall of the exit tunnel in the center of the 70S ribosome.</text>
</comment>
<comment type="subunit">
    <text evidence="1">Part of the 50S ribosomal subunit.</text>
</comment>
<comment type="similarity">
    <text evidence="1">Belongs to the universal ribosomal protein uL22 family.</text>
</comment>
<reference key="1">
    <citation type="journal article" date="2004" name="Genome Res.">
        <title>The complete genome and proteome of Mycoplasma mobile.</title>
        <authorList>
            <person name="Jaffe J.D."/>
            <person name="Stange-Thomann N."/>
            <person name="Smith C."/>
            <person name="DeCaprio D."/>
            <person name="Fisher S."/>
            <person name="Butler J."/>
            <person name="Calvo S."/>
            <person name="Elkins T."/>
            <person name="FitzGerald M.G."/>
            <person name="Hafez N."/>
            <person name="Kodira C.D."/>
            <person name="Major J."/>
            <person name="Wang S."/>
            <person name="Wilkinson J."/>
            <person name="Nicol R."/>
            <person name="Nusbaum C."/>
            <person name="Birren B."/>
            <person name="Berg H.C."/>
            <person name="Church G.M."/>
        </authorList>
    </citation>
    <scope>NUCLEOTIDE SEQUENCE [LARGE SCALE GENOMIC DNA]</scope>
    <source>
        <strain>ATCC 43663 / NCTC 11711 / 163 K</strain>
    </source>
</reference>